<comment type="function">
    <text evidence="1">This protein is one of the early assembly proteins of the 50S ribosomal subunit, although it is not seen to bind rRNA by itself. It is important during the early stages of 50S assembly.</text>
</comment>
<comment type="subunit">
    <text evidence="1">Part of the 50S ribosomal subunit.</text>
</comment>
<comment type="similarity">
    <text evidence="1">Belongs to the universal ribosomal protein uL13 family.</text>
</comment>
<name>RL13_RICRS</name>
<feature type="chain" id="PRO_1000055462" description="Large ribosomal subunit protein uL13">
    <location>
        <begin position="1"/>
        <end position="155"/>
    </location>
</feature>
<sequence length="155" mass="17391">MKTYSAKPSEIEKKWWVIDAKNIVLGRLASRVANMLRGKHKPSFTPHLDCGDNIIIINAEHVNLTGKKANPKDGKIYYRYTGFPGGIKDTTAGKILSGKHPERVIKMAVKRMITRNALGAKQMSNLYVYANGDHPHMAQQPTVYDFASQNPKNKK</sequence>
<organism>
    <name type="scientific">Rickettsia rickettsii (strain Sheila Smith)</name>
    <dbReference type="NCBI Taxonomy" id="392021"/>
    <lineage>
        <taxon>Bacteria</taxon>
        <taxon>Pseudomonadati</taxon>
        <taxon>Pseudomonadota</taxon>
        <taxon>Alphaproteobacteria</taxon>
        <taxon>Rickettsiales</taxon>
        <taxon>Rickettsiaceae</taxon>
        <taxon>Rickettsieae</taxon>
        <taxon>Rickettsia</taxon>
        <taxon>spotted fever group</taxon>
    </lineage>
</organism>
<keyword id="KW-0687">Ribonucleoprotein</keyword>
<keyword id="KW-0689">Ribosomal protein</keyword>
<proteinExistence type="inferred from homology"/>
<reference key="1">
    <citation type="submission" date="2007-09" db="EMBL/GenBank/DDBJ databases">
        <title>Complete genome sequence of Rickettsia rickettsii.</title>
        <authorList>
            <person name="Madan A."/>
            <person name="Fahey J."/>
            <person name="Helton E."/>
            <person name="Ketteman M."/>
            <person name="Madan A."/>
            <person name="Rodrigues S."/>
            <person name="Sanchez A."/>
            <person name="Dasch G."/>
            <person name="Eremeeva M."/>
        </authorList>
    </citation>
    <scope>NUCLEOTIDE SEQUENCE [LARGE SCALE GENOMIC DNA]</scope>
    <source>
        <strain>Sheila Smith</strain>
    </source>
</reference>
<dbReference type="EMBL" id="CP000848">
    <property type="protein sequence ID" value="ABV75925.1"/>
    <property type="molecule type" value="Genomic_DNA"/>
</dbReference>
<dbReference type="RefSeq" id="WP_012150529.1">
    <property type="nucleotide sequence ID" value="NZ_CP121767.1"/>
</dbReference>
<dbReference type="SMR" id="A8GRA0"/>
<dbReference type="GeneID" id="79937090"/>
<dbReference type="KEGG" id="rri:A1G_01795"/>
<dbReference type="HOGENOM" id="CLU_082184_2_0_5"/>
<dbReference type="Proteomes" id="UP000006832">
    <property type="component" value="Chromosome"/>
</dbReference>
<dbReference type="GO" id="GO:0022625">
    <property type="term" value="C:cytosolic large ribosomal subunit"/>
    <property type="evidence" value="ECO:0007669"/>
    <property type="project" value="TreeGrafter"/>
</dbReference>
<dbReference type="GO" id="GO:0003729">
    <property type="term" value="F:mRNA binding"/>
    <property type="evidence" value="ECO:0007669"/>
    <property type="project" value="TreeGrafter"/>
</dbReference>
<dbReference type="GO" id="GO:0003735">
    <property type="term" value="F:structural constituent of ribosome"/>
    <property type="evidence" value="ECO:0007669"/>
    <property type="project" value="InterPro"/>
</dbReference>
<dbReference type="GO" id="GO:0017148">
    <property type="term" value="P:negative regulation of translation"/>
    <property type="evidence" value="ECO:0007669"/>
    <property type="project" value="TreeGrafter"/>
</dbReference>
<dbReference type="GO" id="GO:0006412">
    <property type="term" value="P:translation"/>
    <property type="evidence" value="ECO:0007669"/>
    <property type="project" value="UniProtKB-UniRule"/>
</dbReference>
<dbReference type="CDD" id="cd00392">
    <property type="entry name" value="Ribosomal_L13"/>
    <property type="match status" value="1"/>
</dbReference>
<dbReference type="Gene3D" id="3.90.1180.10">
    <property type="entry name" value="Ribosomal protein L13"/>
    <property type="match status" value="1"/>
</dbReference>
<dbReference type="HAMAP" id="MF_01366">
    <property type="entry name" value="Ribosomal_uL13"/>
    <property type="match status" value="1"/>
</dbReference>
<dbReference type="InterPro" id="IPR005822">
    <property type="entry name" value="Ribosomal_uL13"/>
</dbReference>
<dbReference type="InterPro" id="IPR005823">
    <property type="entry name" value="Ribosomal_uL13_bac-type"/>
</dbReference>
<dbReference type="InterPro" id="IPR023563">
    <property type="entry name" value="Ribosomal_uL13_CS"/>
</dbReference>
<dbReference type="InterPro" id="IPR036899">
    <property type="entry name" value="Ribosomal_uL13_sf"/>
</dbReference>
<dbReference type="NCBIfam" id="TIGR01066">
    <property type="entry name" value="rplM_bact"/>
    <property type="match status" value="1"/>
</dbReference>
<dbReference type="PANTHER" id="PTHR11545:SF2">
    <property type="entry name" value="LARGE RIBOSOMAL SUBUNIT PROTEIN UL13M"/>
    <property type="match status" value="1"/>
</dbReference>
<dbReference type="PANTHER" id="PTHR11545">
    <property type="entry name" value="RIBOSOMAL PROTEIN L13"/>
    <property type="match status" value="1"/>
</dbReference>
<dbReference type="Pfam" id="PF00572">
    <property type="entry name" value="Ribosomal_L13"/>
    <property type="match status" value="1"/>
</dbReference>
<dbReference type="PIRSF" id="PIRSF002181">
    <property type="entry name" value="Ribosomal_L13"/>
    <property type="match status" value="1"/>
</dbReference>
<dbReference type="SUPFAM" id="SSF52161">
    <property type="entry name" value="Ribosomal protein L13"/>
    <property type="match status" value="1"/>
</dbReference>
<dbReference type="PROSITE" id="PS00783">
    <property type="entry name" value="RIBOSOMAL_L13"/>
    <property type="match status" value="1"/>
</dbReference>
<protein>
    <recommendedName>
        <fullName evidence="1">Large ribosomal subunit protein uL13</fullName>
    </recommendedName>
    <alternativeName>
        <fullName evidence="2">50S ribosomal protein L13</fullName>
    </alternativeName>
</protein>
<evidence type="ECO:0000255" key="1">
    <source>
        <dbReference type="HAMAP-Rule" id="MF_01366"/>
    </source>
</evidence>
<evidence type="ECO:0000305" key="2"/>
<accession>A8GRA0</accession>
<gene>
    <name evidence="1" type="primary">rplM</name>
    <name type="ordered locus">A1G_01795</name>
</gene>